<gene>
    <name type="ordered locus">TC_0671</name>
</gene>
<name>Y671_CHLMU</name>
<organism>
    <name type="scientific">Chlamydia muridarum (strain MoPn / Nigg)</name>
    <dbReference type="NCBI Taxonomy" id="243161"/>
    <lineage>
        <taxon>Bacteria</taxon>
        <taxon>Pseudomonadati</taxon>
        <taxon>Chlamydiota</taxon>
        <taxon>Chlamydiia</taxon>
        <taxon>Chlamydiales</taxon>
        <taxon>Chlamydiaceae</taxon>
        <taxon>Chlamydia/Chlamydophila group</taxon>
        <taxon>Chlamydia</taxon>
    </lineage>
</organism>
<protein>
    <recommendedName>
        <fullName>Uncharacterized protein TC_0671</fullName>
    </recommendedName>
</protein>
<dbReference type="EMBL" id="AE002160">
    <property type="protein sequence ID" value="AAF39492.1"/>
    <property type="molecule type" value="Genomic_DNA"/>
</dbReference>
<dbReference type="PIR" id="A81678">
    <property type="entry name" value="A81678"/>
</dbReference>
<dbReference type="RefSeq" id="WP_010231177.1">
    <property type="nucleotide sequence ID" value="NZ_CP063055.1"/>
</dbReference>
<dbReference type="SMR" id="Q9PK02"/>
<dbReference type="GeneID" id="1246032"/>
<dbReference type="KEGG" id="cmu:TC_0671"/>
<dbReference type="HOGENOM" id="CLU_732986_0_0_0"/>
<dbReference type="OrthoDB" id="19192at2"/>
<dbReference type="Proteomes" id="UP000000800">
    <property type="component" value="Chromosome"/>
</dbReference>
<dbReference type="NCBIfam" id="NF047362">
    <property type="entry name" value="CT392_fam"/>
    <property type="match status" value="1"/>
</dbReference>
<evidence type="ECO:0000256" key="1">
    <source>
        <dbReference type="SAM" id="MobiDB-lite"/>
    </source>
</evidence>
<evidence type="ECO:0000305" key="2"/>
<sequence>MSSIQGKGTAGPSPEGIPNSREDGEMNPEGVTISGQTVSFTSVSKSASADDIQQVALPIIQSDSLASSPILGGAIGEIEVADMVAEVVENNEANVQQLDEDLEAIFQAIDAGEEQLESLEVKNKSSLKGVRYSSGRHGMDRNKSSSLSPERTRLANIRTSLRSTASRMRHHAGLVSSSLADLQKQLRSISQEDLKAALGKDSEAVLSRLRKLGLDVNKKGEWRLRTNGDIGRLNQSIHDLSLLVENVNDEGILSLNKEASEEEVNACCSSGSKACQFLQEHLMSALRAIYQQILRFLNWISRKIGVGSKRTDDYYTRPGVFTNPYASYLGANPPINDPRSLRERLRGGGALSGEDTLFSMPQDDSVDSESVSDDDRGSR</sequence>
<accession>Q9PK02</accession>
<comment type="similarity">
    <text evidence="2">Belongs to the chlamydial CPn_0499/CT_392/TC_0671 family.</text>
</comment>
<feature type="chain" id="PRO_0000218389" description="Uncharacterized protein TC_0671">
    <location>
        <begin position="1"/>
        <end position="379"/>
    </location>
</feature>
<feature type="region of interest" description="Disordered" evidence="1">
    <location>
        <begin position="1"/>
        <end position="37"/>
    </location>
</feature>
<feature type="region of interest" description="Disordered" evidence="1">
    <location>
        <begin position="130"/>
        <end position="150"/>
    </location>
</feature>
<feature type="region of interest" description="Disordered" evidence="1">
    <location>
        <begin position="332"/>
        <end position="379"/>
    </location>
</feature>
<reference key="1">
    <citation type="journal article" date="2000" name="Nucleic Acids Res.">
        <title>Genome sequences of Chlamydia trachomatis MoPn and Chlamydia pneumoniae AR39.</title>
        <authorList>
            <person name="Read T.D."/>
            <person name="Brunham R.C."/>
            <person name="Shen C."/>
            <person name="Gill S.R."/>
            <person name="Heidelberg J.F."/>
            <person name="White O."/>
            <person name="Hickey E.K."/>
            <person name="Peterson J.D."/>
            <person name="Utterback T.R."/>
            <person name="Berry K.J."/>
            <person name="Bass S."/>
            <person name="Linher K.D."/>
            <person name="Weidman J.F."/>
            <person name="Khouri H.M."/>
            <person name="Craven B."/>
            <person name="Bowman C."/>
            <person name="Dodson R.J."/>
            <person name="Gwinn M.L."/>
            <person name="Nelson W.C."/>
            <person name="DeBoy R.T."/>
            <person name="Kolonay J.F."/>
            <person name="McClarty G."/>
            <person name="Salzberg S.L."/>
            <person name="Eisen J.A."/>
            <person name="Fraser C.M."/>
        </authorList>
    </citation>
    <scope>NUCLEOTIDE SEQUENCE [LARGE SCALE GENOMIC DNA]</scope>
    <source>
        <strain>MoPn / Nigg</strain>
    </source>
</reference>
<proteinExistence type="inferred from homology"/>